<evidence type="ECO:0000250" key="1">
    <source>
        <dbReference type="UniProtKB" id="P21513"/>
    </source>
</evidence>
<evidence type="ECO:0000255" key="2"/>
<evidence type="ECO:0000255" key="3">
    <source>
        <dbReference type="PROSITE-ProRule" id="PRU00594"/>
    </source>
</evidence>
<evidence type="ECO:0000269" key="4">
    <source>
    </source>
</evidence>
<evidence type="ECO:0000269" key="5">
    <source>
    </source>
</evidence>
<evidence type="ECO:0000269" key="6">
    <source>
    </source>
</evidence>
<evidence type="ECO:0000269" key="7">
    <source>
    </source>
</evidence>
<evidence type="ECO:0000303" key="8">
    <source>
    </source>
</evidence>
<evidence type="ECO:0000303" key="9">
    <source>
    </source>
</evidence>
<evidence type="ECO:0000303" key="10">
    <source ref="1"/>
</evidence>
<evidence type="ECO:0000305" key="11"/>
<keyword id="KW-0025">Alternative splicing</keyword>
<keyword id="KW-0150">Chloroplast</keyword>
<keyword id="KW-0175">Coiled coil</keyword>
<keyword id="KW-0255">Endonuclease</keyword>
<keyword id="KW-0378">Hydrolase</keyword>
<keyword id="KW-0460">Magnesium</keyword>
<keyword id="KW-0479">Metal-binding</keyword>
<keyword id="KW-0507">mRNA processing</keyword>
<keyword id="KW-0540">Nuclease</keyword>
<keyword id="KW-0934">Plastid</keyword>
<keyword id="KW-1185">Reference proteome</keyword>
<keyword id="KW-0694">RNA-binding</keyword>
<keyword id="KW-0809">Transit peptide</keyword>
<keyword id="KW-0862">Zinc</keyword>
<reference key="1">
    <citation type="submission" date="2001-11" db="EMBL/GenBank/DDBJ databases">
        <title>Molecular characterization of an Arabidopsis RNase E-like endoribonuclease.</title>
        <authorList>
            <person name="Walter M."/>
            <person name="Kudla J."/>
        </authorList>
    </citation>
    <scope>NUCLEOTIDE SEQUENCE [MRNA] (ISOFORM 2)</scope>
</reference>
<reference key="2">
    <citation type="journal article" date="1999" name="Nature">
        <title>Sequence and analysis of chromosome 2 of the plant Arabidopsis thaliana.</title>
        <authorList>
            <person name="Lin X."/>
            <person name="Kaul S."/>
            <person name="Rounsley S.D."/>
            <person name="Shea T.P."/>
            <person name="Benito M.-I."/>
            <person name="Town C.D."/>
            <person name="Fujii C.Y."/>
            <person name="Mason T.M."/>
            <person name="Bowman C.L."/>
            <person name="Barnstead M.E."/>
            <person name="Feldblyum T.V."/>
            <person name="Buell C.R."/>
            <person name="Ketchum K.A."/>
            <person name="Lee J.J."/>
            <person name="Ronning C.M."/>
            <person name="Koo H.L."/>
            <person name="Moffat K.S."/>
            <person name="Cronin L.A."/>
            <person name="Shen M."/>
            <person name="Pai G."/>
            <person name="Van Aken S."/>
            <person name="Umayam L."/>
            <person name="Tallon L.J."/>
            <person name="Gill J.E."/>
            <person name="Adams M.D."/>
            <person name="Carrera A.J."/>
            <person name="Creasy T.H."/>
            <person name="Goodman H.M."/>
            <person name="Somerville C.R."/>
            <person name="Copenhaver G.P."/>
            <person name="Preuss D."/>
            <person name="Nierman W.C."/>
            <person name="White O."/>
            <person name="Eisen J.A."/>
            <person name="Salzberg S.L."/>
            <person name="Fraser C.M."/>
            <person name="Venter J.C."/>
        </authorList>
    </citation>
    <scope>NUCLEOTIDE SEQUENCE [LARGE SCALE GENOMIC DNA]</scope>
    <source>
        <strain>cv. Columbia</strain>
    </source>
</reference>
<reference key="3">
    <citation type="journal article" date="2017" name="Plant J.">
        <title>Araport11: a complete reannotation of the Arabidopsis thaliana reference genome.</title>
        <authorList>
            <person name="Cheng C.Y."/>
            <person name="Krishnakumar V."/>
            <person name="Chan A.P."/>
            <person name="Thibaud-Nissen F."/>
            <person name="Schobel S."/>
            <person name="Town C.D."/>
        </authorList>
    </citation>
    <scope>GENOME REANNOTATION</scope>
    <source>
        <strain>cv. Columbia</strain>
    </source>
</reference>
<reference key="4">
    <citation type="journal article" date="2003" name="Science">
        <title>Empirical analysis of transcriptional activity in the Arabidopsis genome.</title>
        <authorList>
            <person name="Yamada K."/>
            <person name="Lim J."/>
            <person name="Dale J.M."/>
            <person name="Chen H."/>
            <person name="Shinn P."/>
            <person name="Palm C.J."/>
            <person name="Southwick A.M."/>
            <person name="Wu H.C."/>
            <person name="Kim C.J."/>
            <person name="Nguyen M."/>
            <person name="Pham P.K."/>
            <person name="Cheuk R.F."/>
            <person name="Karlin-Newmann G."/>
            <person name="Liu S.X."/>
            <person name="Lam B."/>
            <person name="Sakano H."/>
            <person name="Wu T."/>
            <person name="Yu G."/>
            <person name="Miranda M."/>
            <person name="Quach H.L."/>
            <person name="Tripp M."/>
            <person name="Chang C.H."/>
            <person name="Lee J.M."/>
            <person name="Toriumi M.J."/>
            <person name="Chan M.M."/>
            <person name="Tang C.C."/>
            <person name="Onodera C.S."/>
            <person name="Deng J.M."/>
            <person name="Akiyama K."/>
            <person name="Ansari Y."/>
            <person name="Arakawa T."/>
            <person name="Banh J."/>
            <person name="Banno F."/>
            <person name="Bowser L."/>
            <person name="Brooks S.Y."/>
            <person name="Carninci P."/>
            <person name="Chao Q."/>
            <person name="Choy N."/>
            <person name="Enju A."/>
            <person name="Goldsmith A.D."/>
            <person name="Gurjal M."/>
            <person name="Hansen N.F."/>
            <person name="Hayashizaki Y."/>
            <person name="Johnson-Hopson C."/>
            <person name="Hsuan V.W."/>
            <person name="Iida K."/>
            <person name="Karnes M."/>
            <person name="Khan S."/>
            <person name="Koesema E."/>
            <person name="Ishida J."/>
            <person name="Jiang P.X."/>
            <person name="Jones T."/>
            <person name="Kawai J."/>
            <person name="Kamiya A."/>
            <person name="Meyers C."/>
            <person name="Nakajima M."/>
            <person name="Narusaka M."/>
            <person name="Seki M."/>
            <person name="Sakurai T."/>
            <person name="Satou M."/>
            <person name="Tamse R."/>
            <person name="Vaysberg M."/>
            <person name="Wallender E.K."/>
            <person name="Wong C."/>
            <person name="Yamamura Y."/>
            <person name="Yuan S."/>
            <person name="Shinozaki K."/>
            <person name="Davis R.W."/>
            <person name="Theologis A."/>
            <person name="Ecker J.R."/>
        </authorList>
    </citation>
    <scope>NUCLEOTIDE SEQUENCE [LARGE SCALE MRNA] (ISOFORM 4)</scope>
    <source>
        <strain>cv. Columbia</strain>
    </source>
</reference>
<reference key="5">
    <citation type="journal article" date="2008" name="J. Exp. Bot.">
        <title>A 125 kDa RNase E/G-like protein is present in plastids and is essential for chloroplast development and autotrophic growth in Arabidopsis.</title>
        <authorList>
            <person name="Mudd E.A."/>
            <person name="Sullivan S."/>
            <person name="Gisby M.F."/>
            <person name="Mironov A."/>
            <person name="Kwon C.S."/>
            <person name="Chung W.I."/>
            <person name="Day A."/>
        </authorList>
    </citation>
    <scope>NUCLEOTIDE SEQUENCE [MRNA] OF 45-619 (ISOFORM 5)</scope>
    <scope>FUNCTION</scope>
    <scope>SUBCELLULAR LOCATION</scope>
    <scope>TISSUE SPECIFICITY</scope>
    <scope>ALTERNATIVE SPLICING</scope>
    <scope>DISRUPTION PHENOTYPE</scope>
</reference>
<reference key="6">
    <citation type="journal article" date="2008" name="RNA">
        <title>The RNase E/G-type endoribonuclease of higher plants is located in the chloroplast and cleaves RNA similarly to the E. coli enzyme.</title>
        <authorList>
            <person name="Schein A."/>
            <person name="Sheffy-Levin S."/>
            <person name="Glaser F."/>
            <person name="Schuster G."/>
        </authorList>
    </citation>
    <scope>FUNCTION</scope>
    <scope>MUTAGENESIS OF LYS-551 AND LYS-557</scope>
    <scope>SUBUNIT</scope>
    <scope>3D-STRUCTURE MODELING</scope>
    <scope>SUBCELLULAR LOCATION</scope>
</reference>
<reference key="7">
    <citation type="journal article" date="2010" name="Plant J.">
        <title>Knockout of the plastid RNase E leads to defective RNA processing and chloroplast ribosome deficiency.</title>
        <authorList>
            <person name="Walter M."/>
            <person name="Piepenburg K."/>
            <person name="Schottler M.A."/>
            <person name="Petersen K."/>
            <person name="Kahlau S."/>
            <person name="Tiller N."/>
            <person name="Drechsel O."/>
            <person name="Weingartner M."/>
            <person name="Kudla J."/>
            <person name="Bock R."/>
        </authorList>
    </citation>
    <scope>FUNCTION</scope>
    <scope>DISRUPTION PHENOTYPE</scope>
</reference>
<reference key="8">
    <citation type="journal article" date="2012" name="Nucleic Acids Res.">
        <title>RHON1 is a novel ribonucleic acid-binding protein that supports RNase E function in the Arabidopsis chloroplast.</title>
        <authorList>
            <person name="Stoppel R."/>
            <person name="Manavski N."/>
            <person name="Schein A."/>
            <person name="Schuster G."/>
            <person name="Teubner M."/>
            <person name="Schmitz-Linneweber C."/>
            <person name="Meurer J."/>
        </authorList>
    </citation>
    <scope>MUTAGENESIS OF 693-VAL--GLN-698</scope>
    <scope>SUBCELLULAR LOCATION</scope>
    <scope>INTERACTION WITH RHON1</scope>
    <scope>DISRUPTION PHENOTYPE</scope>
    <source>
        <strain>cv. Columbia</strain>
    </source>
</reference>
<protein>
    <recommendedName>
        <fullName>Ribonuclease E/G-like protein, chloroplastic</fullName>
        <shortName>RNase E/G-like protein</shortName>
        <ecNumber>3.1.26.-</ecNumber>
    </recommendedName>
    <alternativeName>
        <fullName>RNase E</fullName>
    </alternativeName>
</protein>
<name>RNE_ARATH</name>
<comment type="function">
    <text evidence="4 5 6">Involved in intercistronic processing of primary transcripts from chloroplast operons. The endonucleolytic activity of the enzyme depends on the number of phosphates at the 5' end, is inhibited by structured RNA, and preferentially cleaves A/U-rich sequences.</text>
</comment>
<comment type="cofactor">
    <cofactor evidence="1">
        <name>Mg(2+)</name>
        <dbReference type="ChEBI" id="CHEBI:18420"/>
    </cofactor>
    <text evidence="1">Binds 1 Mg(2+) ion per subunit.</text>
</comment>
<comment type="cofactor">
    <cofactor evidence="1">
        <name>Zn(2+)</name>
        <dbReference type="ChEBI" id="CHEBI:29105"/>
    </cofactor>
    <text evidence="1">Binds 2 Zn(2+) ions per homotetramer. Zinc ions are bound between subunits.</text>
</comment>
<comment type="subunit">
    <text evidence="1 4 7">Part of a chloroplastic degradosome-like complex. Interacts with RHON1 (PubMed:18441049, PubMed:22735703). A homotetramer formed by a dimer of dimers (By similarity).</text>
</comment>
<comment type="subcellular location">
    <subcellularLocation>
        <location evidence="4 5 7">Plastid</location>
        <location evidence="4 5 7">Chloroplast stroma</location>
    </subcellularLocation>
</comment>
<comment type="alternative products">
    <event type="alternative splicing"/>
    <isoform>
        <id>F4IV66-1</id>
        <name>1</name>
        <sequence type="displayed"/>
    </isoform>
    <isoform>
        <id>F4IV66-2</id>
        <name>2</name>
        <sequence type="described" ref="VSP_045664"/>
    </isoform>
    <isoform>
        <id>F4IV66-3</id>
        <name>3</name>
        <sequence type="described" ref="VSP_045663 VSP_045665"/>
    </isoform>
    <isoform>
        <id>F4IV66-4</id>
        <name>4</name>
        <sequence type="described" ref="VSP_045662"/>
    </isoform>
    <isoform>
        <id>F4IV66-5</id>
        <name>5</name>
        <sequence type="described" ref="VSP_045662 VSP_045666 VSP_045667"/>
    </isoform>
</comment>
<comment type="tissue specificity">
    <text evidence="5">Expressed in cotyledons, rosette and cauline leaves.</text>
</comment>
<comment type="disruption phenotype">
    <text evidence="5 6 7">Reduced photosynthetic activity and retarded growth. Increased number and decreased size of chloroplasts. Loss of autotrophic growth. Pale cotyledons when grown on sucrose-complemented medium.</text>
</comment>
<comment type="similarity">
    <text evidence="11">Belongs to the RNase E/G family.</text>
</comment>
<comment type="sequence caution" evidence="11">
    <conflict type="erroneous gene model prediction">
        <sequence resource="EMBL-CDS" id="AAD27911"/>
    </conflict>
</comment>
<proteinExistence type="evidence at protein level"/>
<gene>
    <name type="primary">RNE</name>
    <name type="synonym">RNEE/G</name>
    <name type="ordered locus">At2g04270</name>
    <name type="ORF">T23O15.10</name>
</gene>
<feature type="transit peptide" description="Chloroplast" evidence="2">
    <location>
        <begin position="1"/>
        <end position="48"/>
    </location>
</feature>
<feature type="chain" id="PRO_0000421383" description="Ribonuclease E/G-like protein, chloroplastic">
    <location>
        <begin position="49"/>
        <end position="1001"/>
    </location>
</feature>
<feature type="domain" description="CBM20" evidence="3">
    <location>
        <begin position="76"/>
        <end position="185"/>
    </location>
</feature>
<feature type="coiled-coil region" evidence="2">
    <location>
        <begin position="769"/>
        <end position="789"/>
    </location>
</feature>
<feature type="binding site" evidence="1">
    <location>
        <position position="755"/>
    </location>
    <ligand>
        <name>Mg(2+)</name>
        <dbReference type="ChEBI" id="CHEBI:18420"/>
        <note>catalytic</note>
    </ligand>
</feature>
<feature type="binding site" evidence="1">
    <location>
        <position position="800"/>
    </location>
    <ligand>
        <name>Mg(2+)</name>
        <dbReference type="ChEBI" id="CHEBI:18420"/>
        <note>catalytic</note>
    </ligand>
</feature>
<feature type="binding site" evidence="1">
    <location>
        <position position="858"/>
    </location>
    <ligand>
        <name>Zn(2+)</name>
        <dbReference type="ChEBI" id="CHEBI:29105"/>
        <note>ligand shared between dimeric partners</note>
    </ligand>
</feature>
<feature type="binding site" evidence="1">
    <location>
        <position position="861"/>
    </location>
    <ligand>
        <name>Zn(2+)</name>
        <dbReference type="ChEBI" id="CHEBI:29105"/>
        <note>ligand shared between dimeric partners</note>
    </ligand>
</feature>
<feature type="splice variant" id="VSP_045662" description="In isoform 4 and isoform 5." evidence="8 9">
    <location>
        <begin position="1"/>
        <end position="288"/>
    </location>
</feature>
<feature type="splice variant" id="VSP_045663" description="In isoform 3." evidence="11">
    <location>
        <begin position="1"/>
        <end position="130"/>
    </location>
</feature>
<feature type="splice variant" id="VSP_045664" description="In isoform 2." evidence="10">
    <original>PLRFLLSVFS</original>
    <variation>VSAQQ</variation>
    <location>
        <begin position="62"/>
        <end position="71"/>
    </location>
</feature>
<feature type="splice variant" id="VSP_045665" description="In isoform 3." evidence="11">
    <original>VKIASGVNF</original>
    <variation>MIMNGKLKS</variation>
    <location>
        <begin position="131"/>
        <end position="139"/>
    </location>
</feature>
<feature type="splice variant" id="VSP_045666" description="In isoform 5." evidence="9">
    <original>AKMEKRGDLENPKSWPRFILRV</original>
    <variation>VSVIISILFCYFSFQPNEEHLE</variation>
    <location>
        <begin position="886"/>
        <end position="907"/>
    </location>
</feature>
<feature type="splice variant" id="VSP_045667" description="In isoform 5." evidence="9">
    <location>
        <begin position="908"/>
        <end position="1001"/>
    </location>
</feature>
<feature type="mutagenesis site" description="Loss of endonucleolytic activity; when associated with A-557." evidence="4">
    <original>K</original>
    <variation>A</variation>
    <location>
        <position position="551"/>
    </location>
</feature>
<feature type="mutagenesis site" description="Loss of endonucleolytic activity; when associated with A-551." evidence="4">
    <original>K</original>
    <variation>A</variation>
    <location>
        <position position="557"/>
    </location>
</feature>
<feature type="mutagenesis site" description="In rne-2; loss of endonucleolytic activity." evidence="7">
    <location>
        <begin position="693"/>
        <end position="698"/>
    </location>
</feature>
<dbReference type="EC" id="3.1.26.-"/>
<dbReference type="EMBL" id="AF450479">
    <property type="protein sequence ID" value="AAN76770.1"/>
    <property type="molecule type" value="mRNA"/>
</dbReference>
<dbReference type="EMBL" id="AC007213">
    <property type="protein sequence ID" value="AAD27911.1"/>
    <property type="status" value="ALT_SEQ"/>
    <property type="molecule type" value="Genomic_DNA"/>
</dbReference>
<dbReference type="EMBL" id="CP002685">
    <property type="protein sequence ID" value="AEC05813.1"/>
    <property type="molecule type" value="Genomic_DNA"/>
</dbReference>
<dbReference type="EMBL" id="CP002685">
    <property type="protein sequence ID" value="AEC05814.1"/>
    <property type="molecule type" value="Genomic_DNA"/>
</dbReference>
<dbReference type="EMBL" id="CP002685">
    <property type="protein sequence ID" value="AEC05815.1"/>
    <property type="molecule type" value="Genomic_DNA"/>
</dbReference>
<dbReference type="EMBL" id="CP002685">
    <property type="protein sequence ID" value="AEC05816.1"/>
    <property type="molecule type" value="Genomic_DNA"/>
</dbReference>
<dbReference type="EMBL" id="CP002685">
    <property type="protein sequence ID" value="AEC05817.1"/>
    <property type="molecule type" value="Genomic_DNA"/>
</dbReference>
<dbReference type="EMBL" id="CP002685">
    <property type="protein sequence ID" value="ANM63269.1"/>
    <property type="molecule type" value="Genomic_DNA"/>
</dbReference>
<dbReference type="EMBL" id="CP002685">
    <property type="protein sequence ID" value="ANM63270.1"/>
    <property type="molecule type" value="Genomic_DNA"/>
</dbReference>
<dbReference type="EMBL" id="CP002685">
    <property type="protein sequence ID" value="ANM63271.1"/>
    <property type="molecule type" value="Genomic_DNA"/>
</dbReference>
<dbReference type="EMBL" id="AY093213">
    <property type="protein sequence ID" value="AAM13212.1"/>
    <property type="molecule type" value="mRNA"/>
</dbReference>
<dbReference type="EMBL" id="BT008793">
    <property type="protein sequence ID" value="AAP68232.1"/>
    <property type="molecule type" value="mRNA"/>
</dbReference>
<dbReference type="EMBL" id="AJ252122">
    <property type="protein sequence ID" value="CAB76425.1"/>
    <property type="molecule type" value="mRNA"/>
</dbReference>
<dbReference type="PIR" id="F84455">
    <property type="entry name" value="F84455"/>
</dbReference>
<dbReference type="RefSeq" id="NP_001189510.1">
    <molecule id="F4IV66-1"/>
    <property type="nucleotide sequence ID" value="NM_001202581.2"/>
</dbReference>
<dbReference type="RefSeq" id="NP_001318196.1">
    <molecule id="F4IV66-4"/>
    <property type="nucleotide sequence ID" value="NM_001335223.1"/>
</dbReference>
<dbReference type="RefSeq" id="NP_001325370.1">
    <molecule id="F4IV66-4"/>
    <property type="nucleotide sequence ID" value="NM_001335226.1"/>
</dbReference>
<dbReference type="RefSeq" id="NP_001325371.1">
    <molecule id="F4IV66-3"/>
    <property type="nucleotide sequence ID" value="NM_001335224.1"/>
</dbReference>
<dbReference type="RefSeq" id="NP_178508.2">
    <molecule id="F4IV66-4"/>
    <property type="nucleotide sequence ID" value="NM_126460.4"/>
</dbReference>
<dbReference type="RefSeq" id="NP_850987.1">
    <molecule id="F4IV66-2"/>
    <property type="nucleotide sequence ID" value="NM_180656.2"/>
</dbReference>
<dbReference type="RefSeq" id="NP_850988.1">
    <molecule id="F4IV66-3"/>
    <property type="nucleotide sequence ID" value="NM_180657.2"/>
</dbReference>
<dbReference type="RefSeq" id="NP_850989.1">
    <molecule id="F4IV66-5"/>
    <property type="nucleotide sequence ID" value="NM_180658.2"/>
</dbReference>
<dbReference type="SMR" id="F4IV66"/>
<dbReference type="FunCoup" id="F4IV66">
    <property type="interactions" value="718"/>
</dbReference>
<dbReference type="STRING" id="3702.F4IV66"/>
<dbReference type="GlyGen" id="F4IV66">
    <property type="glycosylation" value="1 site"/>
</dbReference>
<dbReference type="PaxDb" id="3702-AT2G04270.5"/>
<dbReference type="ProteomicsDB" id="227998">
    <molecule id="F4IV66-1"/>
</dbReference>
<dbReference type="EnsemblPlants" id="AT2G04270.1">
    <molecule id="F4IV66-2"/>
    <property type="protein sequence ID" value="AT2G04270.1"/>
    <property type="gene ID" value="AT2G04270"/>
</dbReference>
<dbReference type="EnsemblPlants" id="AT2G04270.2">
    <molecule id="F4IV66-3"/>
    <property type="protein sequence ID" value="AT2G04270.2"/>
    <property type="gene ID" value="AT2G04270"/>
</dbReference>
<dbReference type="EnsemblPlants" id="AT2G04270.3">
    <molecule id="F4IV66-5"/>
    <property type="protein sequence ID" value="AT2G04270.3"/>
    <property type="gene ID" value="AT2G04270"/>
</dbReference>
<dbReference type="EnsemblPlants" id="AT2G04270.4">
    <molecule id="F4IV66-4"/>
    <property type="protein sequence ID" value="AT2G04270.4"/>
    <property type="gene ID" value="AT2G04270"/>
</dbReference>
<dbReference type="EnsemblPlants" id="AT2G04270.5">
    <molecule id="F4IV66-1"/>
    <property type="protein sequence ID" value="AT2G04270.5"/>
    <property type="gene ID" value="AT2G04270"/>
</dbReference>
<dbReference type="EnsemblPlants" id="AT2G04270.6">
    <molecule id="F4IV66-3"/>
    <property type="protein sequence ID" value="AT2G04270.6"/>
    <property type="gene ID" value="AT2G04270"/>
</dbReference>
<dbReference type="EnsemblPlants" id="AT2G04270.8">
    <molecule id="F4IV66-4"/>
    <property type="protein sequence ID" value="AT2G04270.8"/>
    <property type="gene ID" value="AT2G04270"/>
</dbReference>
<dbReference type="EnsemblPlants" id="AT2G04270.9">
    <molecule id="F4IV66-4"/>
    <property type="protein sequence ID" value="AT2G04270.9"/>
    <property type="gene ID" value="AT2G04270"/>
</dbReference>
<dbReference type="GeneID" id="814965"/>
<dbReference type="Gramene" id="AT2G04270.1">
    <molecule id="F4IV66-2"/>
    <property type="protein sequence ID" value="AT2G04270.1"/>
    <property type="gene ID" value="AT2G04270"/>
</dbReference>
<dbReference type="Gramene" id="AT2G04270.2">
    <molecule id="F4IV66-3"/>
    <property type="protein sequence ID" value="AT2G04270.2"/>
    <property type="gene ID" value="AT2G04270"/>
</dbReference>
<dbReference type="Gramene" id="AT2G04270.3">
    <molecule id="F4IV66-5"/>
    <property type="protein sequence ID" value="AT2G04270.3"/>
    <property type="gene ID" value="AT2G04270"/>
</dbReference>
<dbReference type="Gramene" id="AT2G04270.4">
    <molecule id="F4IV66-4"/>
    <property type="protein sequence ID" value="AT2G04270.4"/>
    <property type="gene ID" value="AT2G04270"/>
</dbReference>
<dbReference type="Gramene" id="AT2G04270.5">
    <molecule id="F4IV66-1"/>
    <property type="protein sequence ID" value="AT2G04270.5"/>
    <property type="gene ID" value="AT2G04270"/>
</dbReference>
<dbReference type="Gramene" id="AT2G04270.6">
    <molecule id="F4IV66-3"/>
    <property type="protein sequence ID" value="AT2G04270.6"/>
    <property type="gene ID" value="AT2G04270"/>
</dbReference>
<dbReference type="Gramene" id="AT2G04270.8">
    <molecule id="F4IV66-4"/>
    <property type="protein sequence ID" value="AT2G04270.8"/>
    <property type="gene ID" value="AT2G04270"/>
</dbReference>
<dbReference type="Gramene" id="AT2G04270.9">
    <molecule id="F4IV66-4"/>
    <property type="protein sequence ID" value="AT2G04270.9"/>
    <property type="gene ID" value="AT2G04270"/>
</dbReference>
<dbReference type="KEGG" id="ath:AT2G04270"/>
<dbReference type="Araport" id="AT2G04270"/>
<dbReference type="TAIR" id="AT2G04270">
    <property type="gene designation" value="RNEE/G"/>
</dbReference>
<dbReference type="eggNOG" id="ENOG502QPXM">
    <property type="taxonomic scope" value="Eukaryota"/>
</dbReference>
<dbReference type="InParanoid" id="F4IV66"/>
<dbReference type="OMA" id="EDECTFS"/>
<dbReference type="OrthoDB" id="6123450at2759"/>
<dbReference type="PRO" id="PR:F4IV66"/>
<dbReference type="Proteomes" id="UP000006548">
    <property type="component" value="Chromosome 2"/>
</dbReference>
<dbReference type="ExpressionAtlas" id="F4IV66">
    <property type="expression patterns" value="baseline and differential"/>
</dbReference>
<dbReference type="GO" id="GO:0009507">
    <property type="term" value="C:chloroplast"/>
    <property type="evidence" value="ECO:0000314"/>
    <property type="project" value="TAIR"/>
</dbReference>
<dbReference type="GO" id="GO:0009570">
    <property type="term" value="C:chloroplast stroma"/>
    <property type="evidence" value="ECO:0007669"/>
    <property type="project" value="UniProtKB-SubCell"/>
</dbReference>
<dbReference type="GO" id="GO:0046872">
    <property type="term" value="F:metal ion binding"/>
    <property type="evidence" value="ECO:0007669"/>
    <property type="project" value="UniProtKB-KW"/>
</dbReference>
<dbReference type="GO" id="GO:0003723">
    <property type="term" value="F:RNA binding"/>
    <property type="evidence" value="ECO:0007669"/>
    <property type="project" value="UniProtKB-KW"/>
</dbReference>
<dbReference type="GO" id="GO:0004521">
    <property type="term" value="F:RNA endonuclease activity"/>
    <property type="evidence" value="ECO:0000314"/>
    <property type="project" value="TAIR"/>
</dbReference>
<dbReference type="GO" id="GO:2001070">
    <property type="term" value="F:starch binding"/>
    <property type="evidence" value="ECO:0007669"/>
    <property type="project" value="InterPro"/>
</dbReference>
<dbReference type="GO" id="GO:0010239">
    <property type="term" value="P:chloroplast mRNA processing"/>
    <property type="evidence" value="ECO:0000315"/>
    <property type="project" value="TAIR"/>
</dbReference>
<dbReference type="GO" id="GO:0009658">
    <property type="term" value="P:chloroplast organization"/>
    <property type="evidence" value="ECO:0000315"/>
    <property type="project" value="TAIR"/>
</dbReference>
<dbReference type="GO" id="GO:1901259">
    <property type="term" value="P:chloroplast rRNA processing"/>
    <property type="evidence" value="ECO:0000315"/>
    <property type="project" value="TAIR"/>
</dbReference>
<dbReference type="FunFam" id="2.60.40.10:FF:001568">
    <property type="entry name" value="Ribonuclease E/G-like protein, chloroplastic"/>
    <property type="match status" value="1"/>
</dbReference>
<dbReference type="Gene3D" id="2.60.40.10">
    <property type="entry name" value="Immunoglobulins"/>
    <property type="match status" value="1"/>
</dbReference>
<dbReference type="Gene3D" id="2.40.50.140">
    <property type="entry name" value="Nucleic acid-binding proteins"/>
    <property type="match status" value="1"/>
</dbReference>
<dbReference type="Gene3D" id="3.40.1260.20">
    <property type="entry name" value="Ribonuclease E, catalytic domain"/>
    <property type="match status" value="1"/>
</dbReference>
<dbReference type="InterPro" id="IPR013784">
    <property type="entry name" value="Carb-bd-like_fold"/>
</dbReference>
<dbReference type="InterPro" id="IPR002044">
    <property type="entry name" value="CBM20"/>
</dbReference>
<dbReference type="InterPro" id="IPR013783">
    <property type="entry name" value="Ig-like_fold"/>
</dbReference>
<dbReference type="InterPro" id="IPR012340">
    <property type="entry name" value="NA-bd_OB-fold"/>
</dbReference>
<dbReference type="InterPro" id="IPR019307">
    <property type="entry name" value="RNA-bd_AU-1/RNase_E/G"/>
</dbReference>
<dbReference type="InterPro" id="IPR004659">
    <property type="entry name" value="RNase_E/G"/>
</dbReference>
<dbReference type="NCBIfam" id="TIGR00757">
    <property type="entry name" value="RNaseEG"/>
    <property type="match status" value="1"/>
</dbReference>
<dbReference type="PANTHER" id="PTHR30001">
    <property type="entry name" value="RIBONUCLEASE"/>
    <property type="match status" value="1"/>
</dbReference>
<dbReference type="PANTHER" id="PTHR30001:SF1">
    <property type="entry name" value="RIBONUCLEASE E_G-LIKE PROTEIN, CHLOROPLASTIC"/>
    <property type="match status" value="1"/>
</dbReference>
<dbReference type="Pfam" id="PF00686">
    <property type="entry name" value="CBM_20"/>
    <property type="match status" value="1"/>
</dbReference>
<dbReference type="Pfam" id="PF10150">
    <property type="entry name" value="RNase_E_G"/>
    <property type="match status" value="1"/>
</dbReference>
<dbReference type="SMART" id="SM01065">
    <property type="entry name" value="CBM_2"/>
    <property type="match status" value="1"/>
</dbReference>
<dbReference type="SUPFAM" id="SSF50249">
    <property type="entry name" value="Nucleic acid-binding proteins"/>
    <property type="match status" value="1"/>
</dbReference>
<dbReference type="SUPFAM" id="SSF49452">
    <property type="entry name" value="Starch-binding domain-like"/>
    <property type="match status" value="1"/>
</dbReference>
<dbReference type="PROSITE" id="PS51166">
    <property type="entry name" value="CBM20"/>
    <property type="match status" value="1"/>
</dbReference>
<organism>
    <name type="scientific">Arabidopsis thaliana</name>
    <name type="common">Mouse-ear cress</name>
    <dbReference type="NCBI Taxonomy" id="3702"/>
    <lineage>
        <taxon>Eukaryota</taxon>
        <taxon>Viridiplantae</taxon>
        <taxon>Streptophyta</taxon>
        <taxon>Embryophyta</taxon>
        <taxon>Tracheophyta</taxon>
        <taxon>Spermatophyta</taxon>
        <taxon>Magnoliopsida</taxon>
        <taxon>eudicotyledons</taxon>
        <taxon>Gunneridae</taxon>
        <taxon>Pentapetalae</taxon>
        <taxon>rosids</taxon>
        <taxon>malvids</taxon>
        <taxon>Brassicales</taxon>
        <taxon>Brassicaceae</taxon>
        <taxon>Camelineae</taxon>
        <taxon>Arabidopsis</taxon>
    </lineage>
</organism>
<accession>F4IV66</accession>
<accession>F4IV67</accession>
<accession>F4IV69</accession>
<accession>Q8GZQ4</accession>
<accession>Q8RWB3</accession>
<accession>Q9M498</accession>
<accession>Q9SI08</accession>
<sequence>MDVTEVPWRRLPQFSVSSRASWLVSSGFPLSSYMFSHVERGKTFRLTLCFGVSRLRPRSAIPLRFLLSVFSEQPPSRLKGLCEVVWIVEADLAANEHLYVTGDPSTLGSWEPDCAISMYPTENDNEWEAKVKIASGVNFRYNYLLKAGYGSSSDVIWRPGPQFSLSVPSSVNQDRKIIIRDSWMSMSISSKSQESYGWGSWIDDAYLFPNCVTPAQSEDECTSADSAIEVPRTHLNDKQVGAESFLCDELAAFSSENSNLSALFSDNYQPIEEPWLIQESITLQHERNMQTDSEQDVESCDDNENNLNTDEQNHQLTETLLPDGGFFQSESIATTILINSSICTVQRIAVLEGGKLVELLLEPVKTNVQCDSVYLGVITKFVPHMGGAFVNIGSARHSFMDIKSNREPFIFPPFCDGSKKQAADGSPILSMNDIPAPHEIEHASYDFEASSLLDIDSNDPGESFHDDDDEHENDEYHVSDHLAGLVNGTVVNHGAVEVGSENGHIPMERGHSADSLDSNASVAKASKVMSSKDNKWIQVRKGTKIIVQVVKEGLGTKGPTLTAYPKLRSRFWVLLTRCKRIGVSKKISGVERTRLKVIAKTLQPQGFGLTVRTVAAGHSLEELQKDLDGLLLTWKNITDEAKSAALAADEGVEGAIPALLHRAMGQTLSVVQDYFNDKVEKMVVDSPRTYHEVTHYLQDMAPDLCNRVELHDKGIPLFDLYEIEEEIEGILSKRVPLSNGGSLVIEQTEALVSIDVNGGHGMFGQGNSQEKAILEVNLAAARQIAREIRLRDIGGIIVVDFIDMADESNKRLVYEEVKKAVERDRSLVKVSELSRHGLMEITRKRVRPSVTFMISEPCSCCHATGRVEALETTFSKIEQEICRQLAKMEKRGDLENPKSWPRFILRVDSHMSSFLTTGKRTRLAILSSSLKVWILLKVARHFTRGTFEVKPFMDEKTVNERQHQVAISLLKKADAIADSSGKKKLTLIPIKKEKTSGKQRR</sequence>